<proteinExistence type="inferred from homology"/>
<reference key="1">
    <citation type="journal article" date="2002" name="Environ. Microbiol.">
        <title>Complete genome sequence and comparative analysis of the metabolically versatile Pseudomonas putida KT2440.</title>
        <authorList>
            <person name="Nelson K.E."/>
            <person name="Weinel C."/>
            <person name="Paulsen I.T."/>
            <person name="Dodson R.J."/>
            <person name="Hilbert H."/>
            <person name="Martins dos Santos V.A.P."/>
            <person name="Fouts D.E."/>
            <person name="Gill S.R."/>
            <person name="Pop M."/>
            <person name="Holmes M."/>
            <person name="Brinkac L.M."/>
            <person name="Beanan M.J."/>
            <person name="DeBoy R.T."/>
            <person name="Daugherty S.C."/>
            <person name="Kolonay J.F."/>
            <person name="Madupu R."/>
            <person name="Nelson W.C."/>
            <person name="White O."/>
            <person name="Peterson J.D."/>
            <person name="Khouri H.M."/>
            <person name="Hance I."/>
            <person name="Chris Lee P."/>
            <person name="Holtzapple E.K."/>
            <person name="Scanlan D."/>
            <person name="Tran K."/>
            <person name="Moazzez A."/>
            <person name="Utterback T.R."/>
            <person name="Rizzo M."/>
            <person name="Lee K."/>
            <person name="Kosack D."/>
            <person name="Moestl D."/>
            <person name="Wedler H."/>
            <person name="Lauber J."/>
            <person name="Stjepandic D."/>
            <person name="Hoheisel J."/>
            <person name="Straetz M."/>
            <person name="Heim S."/>
            <person name="Kiewitz C."/>
            <person name="Eisen J.A."/>
            <person name="Timmis K.N."/>
            <person name="Duesterhoeft A."/>
            <person name="Tuemmler B."/>
            <person name="Fraser C.M."/>
        </authorList>
    </citation>
    <scope>NUCLEOTIDE SEQUENCE [LARGE SCALE GENOMIC DNA]</scope>
    <source>
        <strain>ATCC 47054 / DSM 6125 / CFBP 8728 / NCIMB 11950 / KT2440</strain>
    </source>
</reference>
<accession>Q88EW5</accession>
<organism>
    <name type="scientific">Pseudomonas putida (strain ATCC 47054 / DSM 6125 / CFBP 8728 / NCIMB 11950 / KT2440)</name>
    <dbReference type="NCBI Taxonomy" id="160488"/>
    <lineage>
        <taxon>Bacteria</taxon>
        <taxon>Pseudomonadati</taxon>
        <taxon>Pseudomonadota</taxon>
        <taxon>Gammaproteobacteria</taxon>
        <taxon>Pseudomonadales</taxon>
        <taxon>Pseudomonadaceae</taxon>
        <taxon>Pseudomonas</taxon>
    </lineage>
</organism>
<dbReference type="EC" id="3.1.1.61" evidence="1"/>
<dbReference type="EC" id="3.5.1.44" evidence="1"/>
<dbReference type="EMBL" id="AE015451">
    <property type="protein sequence ID" value="AAN69916.1"/>
    <property type="molecule type" value="Genomic_DNA"/>
</dbReference>
<dbReference type="RefSeq" id="NP_746452.1">
    <property type="nucleotide sequence ID" value="NC_002947.4"/>
</dbReference>
<dbReference type="RefSeq" id="WP_010955067.1">
    <property type="nucleotide sequence ID" value="NZ_CP169744.1"/>
</dbReference>
<dbReference type="SMR" id="Q88EW5"/>
<dbReference type="STRING" id="160488.PP_4337"/>
<dbReference type="PaxDb" id="160488-PP_4337"/>
<dbReference type="KEGG" id="ppu:PP_4337"/>
<dbReference type="PATRIC" id="fig|160488.4.peg.4611"/>
<dbReference type="eggNOG" id="COG2201">
    <property type="taxonomic scope" value="Bacteria"/>
</dbReference>
<dbReference type="HOGENOM" id="CLU_000445_51_0_6"/>
<dbReference type="OrthoDB" id="9793421at2"/>
<dbReference type="PhylomeDB" id="Q88EW5"/>
<dbReference type="BioCyc" id="PPUT160488:G1G01-4615-MONOMER"/>
<dbReference type="Proteomes" id="UP000000556">
    <property type="component" value="Chromosome"/>
</dbReference>
<dbReference type="GO" id="GO:0005737">
    <property type="term" value="C:cytoplasm"/>
    <property type="evidence" value="ECO:0007669"/>
    <property type="project" value="UniProtKB-SubCell"/>
</dbReference>
<dbReference type="GO" id="GO:0000156">
    <property type="term" value="F:phosphorelay response regulator activity"/>
    <property type="evidence" value="ECO:0007669"/>
    <property type="project" value="InterPro"/>
</dbReference>
<dbReference type="GO" id="GO:0008984">
    <property type="term" value="F:protein-glutamate methylesterase activity"/>
    <property type="evidence" value="ECO:0007669"/>
    <property type="project" value="UniProtKB-UniRule"/>
</dbReference>
<dbReference type="GO" id="GO:0050568">
    <property type="term" value="F:protein-glutamine glutaminase activity"/>
    <property type="evidence" value="ECO:0007669"/>
    <property type="project" value="UniProtKB-UniRule"/>
</dbReference>
<dbReference type="GO" id="GO:0006935">
    <property type="term" value="P:chemotaxis"/>
    <property type="evidence" value="ECO:0007669"/>
    <property type="project" value="UniProtKB-UniRule"/>
</dbReference>
<dbReference type="CDD" id="cd16432">
    <property type="entry name" value="CheB_Rec"/>
    <property type="match status" value="1"/>
</dbReference>
<dbReference type="CDD" id="cd17541">
    <property type="entry name" value="REC_CheB-like"/>
    <property type="match status" value="1"/>
</dbReference>
<dbReference type="FunFam" id="3.40.50.2300:FF:000077">
    <property type="entry name" value="Chemotaxis response regulator"/>
    <property type="match status" value="1"/>
</dbReference>
<dbReference type="FunFam" id="3.40.50.180:FF:000001">
    <property type="entry name" value="Protein-glutamate methylesterase/protein-glutamine glutaminase"/>
    <property type="match status" value="1"/>
</dbReference>
<dbReference type="Gene3D" id="3.40.50.2300">
    <property type="match status" value="1"/>
</dbReference>
<dbReference type="Gene3D" id="3.40.50.180">
    <property type="entry name" value="Methylesterase CheB, C-terminal domain"/>
    <property type="match status" value="1"/>
</dbReference>
<dbReference type="HAMAP" id="MF_00099">
    <property type="entry name" value="CheB_chemtxs"/>
    <property type="match status" value="1"/>
</dbReference>
<dbReference type="InterPro" id="IPR008248">
    <property type="entry name" value="CheB-like"/>
</dbReference>
<dbReference type="InterPro" id="IPR035909">
    <property type="entry name" value="CheB_C"/>
</dbReference>
<dbReference type="InterPro" id="IPR011006">
    <property type="entry name" value="CheY-like_superfamily"/>
</dbReference>
<dbReference type="InterPro" id="IPR000673">
    <property type="entry name" value="Sig_transdc_resp-reg_Me-estase"/>
</dbReference>
<dbReference type="InterPro" id="IPR001789">
    <property type="entry name" value="Sig_transdc_resp-reg_receiver"/>
</dbReference>
<dbReference type="NCBIfam" id="NF001965">
    <property type="entry name" value="PRK00742.1"/>
    <property type="match status" value="1"/>
</dbReference>
<dbReference type="PANTHER" id="PTHR42872">
    <property type="entry name" value="PROTEIN-GLUTAMATE METHYLESTERASE/PROTEIN-GLUTAMINE GLUTAMINASE"/>
    <property type="match status" value="1"/>
</dbReference>
<dbReference type="PANTHER" id="PTHR42872:SF3">
    <property type="entry name" value="PROTEIN-GLUTAMATE METHYLESTERASE_PROTEIN-GLUTAMINE GLUTAMINASE 1"/>
    <property type="match status" value="1"/>
</dbReference>
<dbReference type="Pfam" id="PF01339">
    <property type="entry name" value="CheB_methylest"/>
    <property type="match status" value="1"/>
</dbReference>
<dbReference type="Pfam" id="PF00072">
    <property type="entry name" value="Response_reg"/>
    <property type="match status" value="1"/>
</dbReference>
<dbReference type="PIRSF" id="PIRSF000876">
    <property type="entry name" value="RR_chemtxs_CheB"/>
    <property type="match status" value="1"/>
</dbReference>
<dbReference type="SMART" id="SM00448">
    <property type="entry name" value="REC"/>
    <property type="match status" value="1"/>
</dbReference>
<dbReference type="SUPFAM" id="SSF52172">
    <property type="entry name" value="CheY-like"/>
    <property type="match status" value="1"/>
</dbReference>
<dbReference type="SUPFAM" id="SSF52738">
    <property type="entry name" value="Methylesterase CheB, C-terminal domain"/>
    <property type="match status" value="1"/>
</dbReference>
<dbReference type="PROSITE" id="PS50122">
    <property type="entry name" value="CHEB"/>
    <property type="match status" value="1"/>
</dbReference>
<dbReference type="PROSITE" id="PS50110">
    <property type="entry name" value="RESPONSE_REGULATORY"/>
    <property type="match status" value="1"/>
</dbReference>
<comment type="function">
    <text evidence="1">Involved in chemotaxis. Part of a chemotaxis signal transduction system that modulates chemotaxis in response to various stimuli. Catalyzes the demethylation of specific methylglutamate residues introduced into the chemoreceptors (methyl-accepting chemotaxis proteins or MCP) by CheR. Also mediates the irreversible deamidation of specific glutamine residues to glutamic acid.</text>
</comment>
<comment type="catalytic activity">
    <reaction evidence="1">
        <text>[protein]-L-glutamate 5-O-methyl ester + H2O = L-glutamyl-[protein] + methanol + H(+)</text>
        <dbReference type="Rhea" id="RHEA:23236"/>
        <dbReference type="Rhea" id="RHEA-COMP:10208"/>
        <dbReference type="Rhea" id="RHEA-COMP:10311"/>
        <dbReference type="ChEBI" id="CHEBI:15377"/>
        <dbReference type="ChEBI" id="CHEBI:15378"/>
        <dbReference type="ChEBI" id="CHEBI:17790"/>
        <dbReference type="ChEBI" id="CHEBI:29973"/>
        <dbReference type="ChEBI" id="CHEBI:82795"/>
        <dbReference type="EC" id="3.1.1.61"/>
    </reaction>
</comment>
<comment type="catalytic activity">
    <reaction evidence="1">
        <text>L-glutaminyl-[protein] + H2O = L-glutamyl-[protein] + NH4(+)</text>
        <dbReference type="Rhea" id="RHEA:16441"/>
        <dbReference type="Rhea" id="RHEA-COMP:10207"/>
        <dbReference type="Rhea" id="RHEA-COMP:10208"/>
        <dbReference type="ChEBI" id="CHEBI:15377"/>
        <dbReference type="ChEBI" id="CHEBI:28938"/>
        <dbReference type="ChEBI" id="CHEBI:29973"/>
        <dbReference type="ChEBI" id="CHEBI:30011"/>
        <dbReference type="EC" id="3.5.1.44"/>
    </reaction>
</comment>
<comment type="subcellular location">
    <subcellularLocation>
        <location evidence="1">Cytoplasm</location>
    </subcellularLocation>
</comment>
<comment type="domain">
    <text evidence="1">Contains a C-terminal catalytic domain, and an N-terminal region which modulates catalytic activity.</text>
</comment>
<comment type="PTM">
    <text evidence="1">Phosphorylated by CheA. Phosphorylation of the N-terminal regulatory domain activates the methylesterase activity.</text>
</comment>
<comment type="miscellaneous">
    <text>P.putida strain KT2440 does not have a chemotaxis group 2 operon.</text>
</comment>
<comment type="similarity">
    <text evidence="1">Belongs to the CheB family.</text>
</comment>
<protein>
    <recommendedName>
        <fullName>Protein-glutamate methylesterase/protein-glutamine glutaminase of group 1 operon</fullName>
        <ecNumber evidence="1">3.1.1.61</ecNumber>
        <ecNumber evidence="1">3.5.1.44</ecNumber>
    </recommendedName>
</protein>
<sequence>MAVKVLVVDDSGFFRRRVSEILSADPTIQVVGTATNGKEAIDQALALKPDVITMDYEMPMMDGITAVRHIMQRCPTPVLMFSSLTHEGARVTLDALDAGAVDYLPKNFEDISRNPDKVKQLLCEKVHTISRSNRRIGSYARTAPVAAPAPASTFTSQAQTRPAAPARAAAPTPAASQSPAPKRKPYKLVAIGTSTGGPVALQRVLTQLPANFPAPIVLIQHMPAAFTKAFAERLDKLCRISVKEAEDGDMLRPGLALLAPGGKQMMIDGRGTVKILPGDERLNYKPCVDITFGSAAKSYGDKVLSVVLTGMGADGREGARLLKQGGSTVWAQDEASCVIYGMPMAIVKANLADAVYSLDEIGKHLVEACV</sequence>
<feature type="chain" id="PRO_0000158011" description="Protein-glutamate methylesterase/protein-glutamine glutaminase of group 1 operon">
    <location>
        <begin position="1"/>
        <end position="370"/>
    </location>
</feature>
<feature type="domain" description="Response regulatory" evidence="1">
    <location>
        <begin position="4"/>
        <end position="121"/>
    </location>
</feature>
<feature type="domain" description="CheB-type methylesterase" evidence="1">
    <location>
        <begin position="179"/>
        <end position="370"/>
    </location>
</feature>
<feature type="region of interest" description="Disordered" evidence="2">
    <location>
        <begin position="150"/>
        <end position="183"/>
    </location>
</feature>
<feature type="compositionally biased region" description="Low complexity" evidence="2">
    <location>
        <begin position="150"/>
        <end position="180"/>
    </location>
</feature>
<feature type="active site" evidence="1">
    <location>
        <position position="194"/>
    </location>
</feature>
<feature type="active site" evidence="1">
    <location>
        <position position="221"/>
    </location>
</feature>
<feature type="active site" evidence="1">
    <location>
        <position position="314"/>
    </location>
</feature>
<feature type="modified residue" description="4-aspartylphosphate" evidence="1">
    <location>
        <position position="55"/>
    </location>
</feature>
<keyword id="KW-0145">Chemotaxis</keyword>
<keyword id="KW-0963">Cytoplasm</keyword>
<keyword id="KW-0378">Hydrolase</keyword>
<keyword id="KW-0597">Phosphoprotein</keyword>
<keyword id="KW-1185">Reference proteome</keyword>
<evidence type="ECO:0000255" key="1">
    <source>
        <dbReference type="HAMAP-Rule" id="MF_00099"/>
    </source>
</evidence>
<evidence type="ECO:0000256" key="2">
    <source>
        <dbReference type="SAM" id="MobiDB-lite"/>
    </source>
</evidence>
<name>CHEB1_PSEPK</name>
<gene>
    <name evidence="1" type="primary">cheB1</name>
    <name type="ordered locus">PP_4337</name>
</gene>